<gene>
    <name type="primary">petA</name>
</gene>
<reference key="1">
    <citation type="journal article" date="2007" name="Mol. Biol. Evol.">
        <title>The complete chloroplast genome of the chlorarachniophyte Bigelowiella natans: evidence for independent origins of chlorarachniophyte and euglenid secondary endosymbionts.</title>
        <authorList>
            <person name="Rogers M.B."/>
            <person name="Gilson P.R."/>
            <person name="Su V."/>
            <person name="McFadden G.I."/>
            <person name="Keeling P.J."/>
        </authorList>
    </citation>
    <scope>NUCLEOTIDE SEQUENCE [LARGE SCALE GENOMIC DNA]</scope>
</reference>
<dbReference type="EMBL" id="DQ851108">
    <property type="protein sequence ID" value="ABG91395.1"/>
    <property type="molecule type" value="Genomic_DNA"/>
</dbReference>
<dbReference type="RefSeq" id="YP_778563.1">
    <property type="nucleotide sequence ID" value="NC_008408.1"/>
</dbReference>
<dbReference type="SMR" id="Q06J64"/>
<dbReference type="GeneID" id="4352980"/>
<dbReference type="GO" id="GO:0009535">
    <property type="term" value="C:chloroplast thylakoid membrane"/>
    <property type="evidence" value="ECO:0007669"/>
    <property type="project" value="UniProtKB-SubCell"/>
</dbReference>
<dbReference type="GO" id="GO:0009055">
    <property type="term" value="F:electron transfer activity"/>
    <property type="evidence" value="ECO:0007669"/>
    <property type="project" value="UniProtKB-UniRule"/>
</dbReference>
<dbReference type="GO" id="GO:0020037">
    <property type="term" value="F:heme binding"/>
    <property type="evidence" value="ECO:0007669"/>
    <property type="project" value="InterPro"/>
</dbReference>
<dbReference type="GO" id="GO:0005506">
    <property type="term" value="F:iron ion binding"/>
    <property type="evidence" value="ECO:0007669"/>
    <property type="project" value="InterPro"/>
</dbReference>
<dbReference type="GO" id="GO:0015979">
    <property type="term" value="P:photosynthesis"/>
    <property type="evidence" value="ECO:0007669"/>
    <property type="project" value="UniProtKB-UniRule"/>
</dbReference>
<dbReference type="FunFam" id="1.20.5.700:FF:000001">
    <property type="entry name" value="Cytochrome f"/>
    <property type="match status" value="1"/>
</dbReference>
<dbReference type="Gene3D" id="2.40.50.100">
    <property type="match status" value="1"/>
</dbReference>
<dbReference type="Gene3D" id="2.60.40.830">
    <property type="entry name" value="Cytochrome f large domain"/>
    <property type="match status" value="1"/>
</dbReference>
<dbReference type="Gene3D" id="1.20.5.700">
    <property type="entry name" value="Single helix bin"/>
    <property type="match status" value="1"/>
</dbReference>
<dbReference type="HAMAP" id="MF_00610">
    <property type="entry name" value="Cytb6_f_cytF"/>
    <property type="match status" value="1"/>
</dbReference>
<dbReference type="InterPro" id="IPR024058">
    <property type="entry name" value="Cyt-f_TM"/>
</dbReference>
<dbReference type="InterPro" id="IPR002325">
    <property type="entry name" value="Cyt_f"/>
</dbReference>
<dbReference type="InterPro" id="IPR024094">
    <property type="entry name" value="Cyt_f_lg_dom"/>
</dbReference>
<dbReference type="InterPro" id="IPR036826">
    <property type="entry name" value="Cyt_f_lg_dom_sf"/>
</dbReference>
<dbReference type="InterPro" id="IPR011054">
    <property type="entry name" value="Rudment_hybrid_motif"/>
</dbReference>
<dbReference type="PANTHER" id="PTHR33288">
    <property type="match status" value="1"/>
</dbReference>
<dbReference type="PANTHER" id="PTHR33288:SF10">
    <property type="entry name" value="CYTOCHROME F"/>
    <property type="match status" value="1"/>
</dbReference>
<dbReference type="Pfam" id="PF01333">
    <property type="entry name" value="Apocytochr_F_C"/>
    <property type="match status" value="1"/>
</dbReference>
<dbReference type="Pfam" id="PF16639">
    <property type="entry name" value="Apocytochr_F_N"/>
    <property type="match status" value="1"/>
</dbReference>
<dbReference type="PRINTS" id="PR00610">
    <property type="entry name" value="CYTOCHROMEF"/>
</dbReference>
<dbReference type="SUPFAM" id="SSF103431">
    <property type="entry name" value="Cytochrome f subunit of the cytochrome b6f complex, transmembrane anchor"/>
    <property type="match status" value="1"/>
</dbReference>
<dbReference type="SUPFAM" id="SSF49441">
    <property type="entry name" value="Cytochrome f, large domain"/>
    <property type="match status" value="1"/>
</dbReference>
<dbReference type="SUPFAM" id="SSF51246">
    <property type="entry name" value="Rudiment single hybrid motif"/>
    <property type="match status" value="1"/>
</dbReference>
<dbReference type="PROSITE" id="PS51010">
    <property type="entry name" value="CYTF"/>
    <property type="match status" value="1"/>
</dbReference>
<sequence length="312" mass="34186">MYLSKNFFLNLKTFIFSFFVLCFFSQSAQAYPIFAKQYFSSPREVSGRIACSYCHLAQKPVELSVPQSVFPNTVFEAVIKVPYDKTVKQVSGQGSKFGLNIGAILILPEGFTLAPVDRLSESLKKKTAGLSFLPYNNNNKSTFMVGPVSGDKYDKLVFPVLSPDYGPNTAFLKSAVYVGGNRGRGQIYPNGEKSNNNLFASSSNGVVSEIKSTKNGGFEVVITTNDGNSVVENIGSGATIIVQEGQQVKAEQPLTTDPNVGGFGQSETEIGLQNPIRVQGLLLFSLFILLAQIFLVLKKKQFEKVQLFEMNF</sequence>
<geneLocation type="chloroplast"/>
<proteinExistence type="inferred from homology"/>
<evidence type="ECO:0000250" key="1"/>
<evidence type="ECO:0000255" key="2"/>
<evidence type="ECO:0000305" key="3"/>
<keyword id="KW-0150">Chloroplast</keyword>
<keyword id="KW-0249">Electron transport</keyword>
<keyword id="KW-0349">Heme</keyword>
<keyword id="KW-0408">Iron</keyword>
<keyword id="KW-0472">Membrane</keyword>
<keyword id="KW-0479">Metal-binding</keyword>
<keyword id="KW-0602">Photosynthesis</keyword>
<keyword id="KW-0934">Plastid</keyword>
<keyword id="KW-0732">Signal</keyword>
<keyword id="KW-0793">Thylakoid</keyword>
<keyword id="KW-0812">Transmembrane</keyword>
<keyword id="KW-1133">Transmembrane helix</keyword>
<keyword id="KW-0813">Transport</keyword>
<organism>
    <name type="scientific">Bigelowiella natans</name>
    <name type="common">Pedinomonas minutissima</name>
    <name type="synonym">Chlorarachnion sp. (strain CCMP621)</name>
    <dbReference type="NCBI Taxonomy" id="227086"/>
    <lineage>
        <taxon>Eukaryota</taxon>
        <taxon>Sar</taxon>
        <taxon>Rhizaria</taxon>
        <taxon>Cercozoa</taxon>
        <taxon>Chlorarachniophyceae</taxon>
        <taxon>Bigelowiella</taxon>
    </lineage>
</organism>
<accession>Q06J64</accession>
<protein>
    <recommendedName>
        <fullName>Cytochrome f</fullName>
    </recommendedName>
</protein>
<name>CYF_BIGNA</name>
<comment type="function">
    <text evidence="1">Component of the cytochrome b6-f complex, which mediates electron transfer between photosystem II (PSII) and photosystem I (PSI), cyclic electron flow around PSI, and state transitions.</text>
</comment>
<comment type="cofactor">
    <cofactor evidence="1">
        <name>heme</name>
        <dbReference type="ChEBI" id="CHEBI:30413"/>
    </cofactor>
    <text evidence="1">Binds 1 heme group covalently.</text>
</comment>
<comment type="subunit">
    <text evidence="1">The 4 large subunits of the cytochrome b6-f complex are cytochrome b6, subunit IV (17 kDa polypeptide, petD), cytochrome f and the Rieske protein, while the 4 small subunits are PetG, PetL, PetM and PetN. The complex functions as a dimer (By similarity).</text>
</comment>
<comment type="subcellular location">
    <subcellularLocation>
        <location evidence="1">Plastid</location>
        <location evidence="1">Chloroplast thylakoid membrane</location>
        <topology evidence="1">Single-pass membrane protein</topology>
    </subcellularLocation>
</comment>
<comment type="similarity">
    <text evidence="3">Belongs to the cytochrome f family.</text>
</comment>
<feature type="signal peptide" evidence="2">
    <location>
        <begin position="1"/>
        <end position="30"/>
    </location>
</feature>
<feature type="chain" id="PRO_0000310405" description="Cytochrome f">
    <location>
        <begin position="31"/>
        <end position="312"/>
    </location>
</feature>
<feature type="transmembrane region" description="Helical" evidence="2">
    <location>
        <begin position="278"/>
        <end position="298"/>
    </location>
</feature>
<feature type="binding site" description="axial binding residue" evidence="1">
    <location>
        <position position="31"/>
    </location>
    <ligand>
        <name>heme</name>
        <dbReference type="ChEBI" id="CHEBI:30413"/>
    </ligand>
    <ligandPart>
        <name>Fe</name>
        <dbReference type="ChEBI" id="CHEBI:18248"/>
    </ligandPart>
</feature>
<feature type="binding site" description="covalent" evidence="1">
    <location>
        <position position="51"/>
    </location>
    <ligand>
        <name>heme</name>
        <dbReference type="ChEBI" id="CHEBI:30413"/>
    </ligand>
</feature>
<feature type="binding site" description="covalent" evidence="1">
    <location>
        <position position="54"/>
    </location>
    <ligand>
        <name>heme</name>
        <dbReference type="ChEBI" id="CHEBI:30413"/>
    </ligand>
</feature>
<feature type="binding site" description="axial binding residue" evidence="1">
    <location>
        <position position="55"/>
    </location>
    <ligand>
        <name>heme</name>
        <dbReference type="ChEBI" id="CHEBI:30413"/>
    </ligand>
    <ligandPart>
        <name>Fe</name>
        <dbReference type="ChEBI" id="CHEBI:18248"/>
    </ligandPart>
</feature>